<gene>
    <name evidence="1" type="primary">rimK2</name>
    <name type="ordered locus">Shewmr4_1745</name>
</gene>
<reference key="1">
    <citation type="submission" date="2006-08" db="EMBL/GenBank/DDBJ databases">
        <title>Complete sequence of Shewanella sp. MR-4.</title>
        <authorList>
            <consortium name="US DOE Joint Genome Institute"/>
            <person name="Copeland A."/>
            <person name="Lucas S."/>
            <person name="Lapidus A."/>
            <person name="Barry K."/>
            <person name="Detter J.C."/>
            <person name="Glavina del Rio T."/>
            <person name="Hammon N."/>
            <person name="Israni S."/>
            <person name="Dalin E."/>
            <person name="Tice H."/>
            <person name="Pitluck S."/>
            <person name="Kiss H."/>
            <person name="Brettin T."/>
            <person name="Bruce D."/>
            <person name="Han C."/>
            <person name="Tapia R."/>
            <person name="Gilna P."/>
            <person name="Schmutz J."/>
            <person name="Larimer F."/>
            <person name="Land M."/>
            <person name="Hauser L."/>
            <person name="Kyrpides N."/>
            <person name="Mikhailova N."/>
            <person name="Nealson K."/>
            <person name="Konstantinidis K."/>
            <person name="Klappenbach J."/>
            <person name="Tiedje J."/>
            <person name="Richardson P."/>
        </authorList>
    </citation>
    <scope>NUCLEOTIDE SEQUENCE [LARGE SCALE GENOMIC DNA]</scope>
    <source>
        <strain>MR-4</strain>
    </source>
</reference>
<comment type="cofactor">
    <cofactor evidence="1">
        <name>Mg(2+)</name>
        <dbReference type="ChEBI" id="CHEBI:18420"/>
    </cofactor>
    <cofactor evidence="1">
        <name>Mn(2+)</name>
        <dbReference type="ChEBI" id="CHEBI:29035"/>
    </cofactor>
    <text evidence="1">Binds 2 magnesium or manganese ions per subunit.</text>
</comment>
<comment type="similarity">
    <text evidence="1">Belongs to the RimK family.</text>
</comment>
<keyword id="KW-0067">ATP-binding</keyword>
<keyword id="KW-0436">Ligase</keyword>
<keyword id="KW-0460">Magnesium</keyword>
<keyword id="KW-0464">Manganese</keyword>
<keyword id="KW-0479">Metal-binding</keyword>
<keyword id="KW-0547">Nucleotide-binding</keyword>
<keyword id="KW-0648">Protein biosynthesis</keyword>
<organism>
    <name type="scientific">Shewanella sp. (strain MR-4)</name>
    <dbReference type="NCBI Taxonomy" id="60480"/>
    <lineage>
        <taxon>Bacteria</taxon>
        <taxon>Pseudomonadati</taxon>
        <taxon>Pseudomonadota</taxon>
        <taxon>Gammaproteobacteria</taxon>
        <taxon>Alteromonadales</taxon>
        <taxon>Shewanellaceae</taxon>
        <taxon>Shewanella</taxon>
    </lineage>
</organism>
<evidence type="ECO:0000255" key="1">
    <source>
        <dbReference type="HAMAP-Rule" id="MF_01552"/>
    </source>
</evidence>
<accession>Q0HJE8</accession>
<proteinExistence type="inferred from homology"/>
<sequence length="299" mass="32141">MRIAILSQGPELYSTKRLVEAATLRGHEVKVINPLECYMNINMRQSSIHIGGEELPPFDAVIPRIGASITFYGSAVLRQFEMMGVYALNDSVGISRSRDKLRSMQLMSRRGIGLPITGFANKPSDIPDLIDMVGGAPLVIKLLEGTQGIGVVLAETRKAAESVIEAFMGLKANIMVQEYIKEANGADIRCFVLGDKVIAAMKRQAMPGEFRSNLHRGGTASLVKLTPEERSVAIRAAKTMGLNVAGVDLLRSNHGPVVMEVNSSPGLEGIEGATAKDVAGAIIEFVEKNALKAKKPTQA</sequence>
<protein>
    <recommendedName>
        <fullName evidence="1">Probable alpha-L-glutamate ligase 2</fullName>
        <ecNumber evidence="1">6.3.2.-</ecNumber>
    </recommendedName>
</protein>
<name>RIMK2_SHESM</name>
<dbReference type="EC" id="6.3.2.-" evidence="1"/>
<dbReference type="EMBL" id="CP000446">
    <property type="protein sequence ID" value="ABI38819.1"/>
    <property type="molecule type" value="Genomic_DNA"/>
</dbReference>
<dbReference type="SMR" id="Q0HJE8"/>
<dbReference type="KEGG" id="she:Shewmr4_1745"/>
<dbReference type="HOGENOM" id="CLU_054353_0_1_6"/>
<dbReference type="GO" id="GO:0005737">
    <property type="term" value="C:cytoplasm"/>
    <property type="evidence" value="ECO:0007669"/>
    <property type="project" value="TreeGrafter"/>
</dbReference>
<dbReference type="GO" id="GO:0005524">
    <property type="term" value="F:ATP binding"/>
    <property type="evidence" value="ECO:0007669"/>
    <property type="project" value="UniProtKB-UniRule"/>
</dbReference>
<dbReference type="GO" id="GO:0046872">
    <property type="term" value="F:metal ion binding"/>
    <property type="evidence" value="ECO:0007669"/>
    <property type="project" value="UniProtKB-KW"/>
</dbReference>
<dbReference type="GO" id="GO:0018169">
    <property type="term" value="F:ribosomal S6-glutamic acid ligase activity"/>
    <property type="evidence" value="ECO:0007669"/>
    <property type="project" value="TreeGrafter"/>
</dbReference>
<dbReference type="GO" id="GO:0036211">
    <property type="term" value="P:protein modification process"/>
    <property type="evidence" value="ECO:0007669"/>
    <property type="project" value="InterPro"/>
</dbReference>
<dbReference type="GO" id="GO:0009432">
    <property type="term" value="P:SOS response"/>
    <property type="evidence" value="ECO:0007669"/>
    <property type="project" value="TreeGrafter"/>
</dbReference>
<dbReference type="GO" id="GO:0006412">
    <property type="term" value="P:translation"/>
    <property type="evidence" value="ECO:0007669"/>
    <property type="project" value="UniProtKB-KW"/>
</dbReference>
<dbReference type="FunFam" id="3.40.50.20:FF:000004">
    <property type="entry name" value="Probable alpha-L-glutamate ligase"/>
    <property type="match status" value="1"/>
</dbReference>
<dbReference type="FunFam" id="3.30.1490.20:FF:000005">
    <property type="entry name" value="Probable alpha-L-glutamate ligase 1"/>
    <property type="match status" value="1"/>
</dbReference>
<dbReference type="FunFam" id="3.30.470.20:FF:000016">
    <property type="entry name" value="Ribosomal protein S6--L-glutamate ligase"/>
    <property type="match status" value="1"/>
</dbReference>
<dbReference type="Gene3D" id="3.40.50.20">
    <property type="match status" value="1"/>
</dbReference>
<dbReference type="Gene3D" id="3.30.1490.20">
    <property type="entry name" value="ATP-grasp fold, A domain"/>
    <property type="match status" value="1"/>
</dbReference>
<dbReference type="Gene3D" id="3.30.470.20">
    <property type="entry name" value="ATP-grasp fold, B domain"/>
    <property type="match status" value="1"/>
</dbReference>
<dbReference type="HAMAP" id="MF_01552">
    <property type="entry name" value="RimK"/>
    <property type="match status" value="1"/>
</dbReference>
<dbReference type="InterPro" id="IPR011761">
    <property type="entry name" value="ATP-grasp"/>
</dbReference>
<dbReference type="InterPro" id="IPR013651">
    <property type="entry name" value="ATP-grasp_RimK-type"/>
</dbReference>
<dbReference type="InterPro" id="IPR013815">
    <property type="entry name" value="ATP_grasp_subdomain_1"/>
</dbReference>
<dbReference type="InterPro" id="IPR023533">
    <property type="entry name" value="RimK"/>
</dbReference>
<dbReference type="InterPro" id="IPR041107">
    <property type="entry name" value="Rimk_N"/>
</dbReference>
<dbReference type="InterPro" id="IPR004666">
    <property type="entry name" value="Rp_bS6_RimK/Lys_biosynth_LsyX"/>
</dbReference>
<dbReference type="NCBIfam" id="NF007764">
    <property type="entry name" value="PRK10446.1"/>
    <property type="match status" value="1"/>
</dbReference>
<dbReference type="NCBIfam" id="TIGR00768">
    <property type="entry name" value="rimK_fam"/>
    <property type="match status" value="1"/>
</dbReference>
<dbReference type="PANTHER" id="PTHR21621:SF7">
    <property type="entry name" value="RIBOSOMAL PROTEIN BS6--L-GLUTAMATE LIGASE"/>
    <property type="match status" value="1"/>
</dbReference>
<dbReference type="PANTHER" id="PTHR21621">
    <property type="entry name" value="RIBOSOMAL PROTEIN S6 MODIFICATION PROTEIN"/>
    <property type="match status" value="1"/>
</dbReference>
<dbReference type="Pfam" id="PF08443">
    <property type="entry name" value="RimK"/>
    <property type="match status" value="1"/>
</dbReference>
<dbReference type="Pfam" id="PF18030">
    <property type="entry name" value="Rimk_N"/>
    <property type="match status" value="1"/>
</dbReference>
<dbReference type="SUPFAM" id="SSF56059">
    <property type="entry name" value="Glutathione synthetase ATP-binding domain-like"/>
    <property type="match status" value="1"/>
</dbReference>
<dbReference type="PROSITE" id="PS50975">
    <property type="entry name" value="ATP_GRASP"/>
    <property type="match status" value="1"/>
</dbReference>
<feature type="chain" id="PRO_0000340563" description="Probable alpha-L-glutamate ligase 2">
    <location>
        <begin position="1"/>
        <end position="299"/>
    </location>
</feature>
<feature type="domain" description="ATP-grasp" evidence="1">
    <location>
        <begin position="104"/>
        <end position="287"/>
    </location>
</feature>
<feature type="binding site" evidence="1">
    <location>
        <position position="141"/>
    </location>
    <ligand>
        <name>ATP</name>
        <dbReference type="ChEBI" id="CHEBI:30616"/>
    </ligand>
</feature>
<feature type="binding site" evidence="1">
    <location>
        <begin position="178"/>
        <end position="179"/>
    </location>
    <ligand>
        <name>ATP</name>
        <dbReference type="ChEBI" id="CHEBI:30616"/>
    </ligand>
</feature>
<feature type="binding site" evidence="1">
    <location>
        <position position="187"/>
    </location>
    <ligand>
        <name>ATP</name>
        <dbReference type="ChEBI" id="CHEBI:30616"/>
    </ligand>
</feature>
<feature type="binding site" evidence="1">
    <location>
        <begin position="211"/>
        <end position="213"/>
    </location>
    <ligand>
        <name>ATP</name>
        <dbReference type="ChEBI" id="CHEBI:30616"/>
    </ligand>
</feature>
<feature type="binding site" evidence="1">
    <location>
        <position position="248"/>
    </location>
    <ligand>
        <name>Mg(2+)</name>
        <dbReference type="ChEBI" id="CHEBI:18420"/>
        <label>1</label>
    </ligand>
</feature>
<feature type="binding site" evidence="1">
    <location>
        <position position="248"/>
    </location>
    <ligand>
        <name>Mn(2+)</name>
        <dbReference type="ChEBI" id="CHEBI:29035"/>
        <label>1</label>
    </ligand>
</feature>
<feature type="binding site" evidence="1">
    <location>
        <position position="260"/>
    </location>
    <ligand>
        <name>Mg(2+)</name>
        <dbReference type="ChEBI" id="CHEBI:18420"/>
        <label>1</label>
    </ligand>
</feature>
<feature type="binding site" evidence="1">
    <location>
        <position position="260"/>
    </location>
    <ligand>
        <name>Mg(2+)</name>
        <dbReference type="ChEBI" id="CHEBI:18420"/>
        <label>2</label>
    </ligand>
</feature>
<feature type="binding site" evidence="1">
    <location>
        <position position="260"/>
    </location>
    <ligand>
        <name>Mn(2+)</name>
        <dbReference type="ChEBI" id="CHEBI:29035"/>
        <label>1</label>
    </ligand>
</feature>
<feature type="binding site" evidence="1">
    <location>
        <position position="260"/>
    </location>
    <ligand>
        <name>Mn(2+)</name>
        <dbReference type="ChEBI" id="CHEBI:29035"/>
        <label>2</label>
    </ligand>
</feature>
<feature type="binding site" evidence="1">
    <location>
        <position position="262"/>
    </location>
    <ligand>
        <name>Mg(2+)</name>
        <dbReference type="ChEBI" id="CHEBI:18420"/>
        <label>2</label>
    </ligand>
</feature>
<feature type="binding site" evidence="1">
    <location>
        <position position="262"/>
    </location>
    <ligand>
        <name>Mn(2+)</name>
        <dbReference type="ChEBI" id="CHEBI:29035"/>
        <label>2</label>
    </ligand>
</feature>